<comment type="subcellular location">
    <subcellularLocation>
        <location evidence="3">Host membrane</location>
        <topology evidence="3">Single-pass membrane protein</topology>
    </subcellularLocation>
</comment>
<feature type="chain" id="PRO_0000377942" description="Uncharacterized protein IIV3-013L">
    <location>
        <begin position="1"/>
        <end position="90"/>
    </location>
</feature>
<feature type="transmembrane region" description="Helical" evidence="1">
    <location>
        <begin position="52"/>
        <end position="72"/>
    </location>
</feature>
<feature type="region of interest" description="Disordered" evidence="2">
    <location>
        <begin position="13"/>
        <end position="34"/>
    </location>
</feature>
<dbReference type="EMBL" id="DQ643392">
    <property type="protein sequence ID" value="ABF82043.1"/>
    <property type="molecule type" value="Genomic_DNA"/>
</dbReference>
<dbReference type="RefSeq" id="YP_654585.1">
    <property type="nucleotide sequence ID" value="NC_008187.1"/>
</dbReference>
<dbReference type="SMR" id="Q197E7"/>
<dbReference type="KEGG" id="vg:4156262"/>
<dbReference type="OrthoDB" id="21455at10239"/>
<dbReference type="Proteomes" id="UP000001358">
    <property type="component" value="Genome"/>
</dbReference>
<dbReference type="GO" id="GO:0033644">
    <property type="term" value="C:host cell membrane"/>
    <property type="evidence" value="ECO:0007669"/>
    <property type="project" value="UniProtKB-SubCell"/>
</dbReference>
<dbReference type="GO" id="GO:0016020">
    <property type="term" value="C:membrane"/>
    <property type="evidence" value="ECO:0007669"/>
    <property type="project" value="UniProtKB-KW"/>
</dbReference>
<protein>
    <recommendedName>
        <fullName>Uncharacterized protein IIV3-013L</fullName>
    </recommendedName>
</protein>
<accession>Q197E7</accession>
<name>013L_IIV3</name>
<organism>
    <name type="scientific">Invertebrate iridescent virus 3</name>
    <name type="common">IIV-3</name>
    <name type="synonym">Mosquito iridescent virus</name>
    <dbReference type="NCBI Taxonomy" id="345201"/>
    <lineage>
        <taxon>Viruses</taxon>
        <taxon>Varidnaviria</taxon>
        <taxon>Bamfordvirae</taxon>
        <taxon>Nucleocytoviricota</taxon>
        <taxon>Megaviricetes</taxon>
        <taxon>Pimascovirales</taxon>
        <taxon>Iridoviridae</taxon>
        <taxon>Betairidovirinae</taxon>
        <taxon>Chloriridovirus</taxon>
    </lineage>
</organism>
<evidence type="ECO:0000255" key="1"/>
<evidence type="ECO:0000256" key="2">
    <source>
        <dbReference type="SAM" id="MobiDB-lite"/>
    </source>
</evidence>
<evidence type="ECO:0000305" key="3"/>
<gene>
    <name type="ORF">IIV3-013L</name>
</gene>
<proteinExistence type="predicted"/>
<keyword id="KW-1043">Host membrane</keyword>
<keyword id="KW-0472">Membrane</keyword>
<keyword id="KW-1185">Reference proteome</keyword>
<keyword id="KW-0812">Transmembrane</keyword>
<keyword id="KW-1133">Transmembrane helix</keyword>
<organismHost>
    <name type="scientific">Aedes vexans</name>
    <name type="common">Inland floodwater mosquito</name>
    <name type="synonym">Culex vexans</name>
    <dbReference type="NCBI Taxonomy" id="7163"/>
</organismHost>
<organismHost>
    <name type="scientific">Culex territans</name>
    <dbReference type="NCBI Taxonomy" id="42431"/>
</organismHost>
<organismHost>
    <name type="scientific">Culiseta annulata</name>
    <dbReference type="NCBI Taxonomy" id="332058"/>
</organismHost>
<organismHost>
    <name type="scientific">Ochlerotatus sollicitans</name>
    <name type="common">eastern saltmarsh mosquito</name>
    <dbReference type="NCBI Taxonomy" id="310513"/>
</organismHost>
<organismHost>
    <name type="scientific">Ochlerotatus taeniorhynchus</name>
    <name type="common">Black salt marsh mosquito</name>
    <name type="synonym">Aedes taeniorhynchus</name>
    <dbReference type="NCBI Taxonomy" id="329105"/>
</organismHost>
<organismHost>
    <name type="scientific">Psorophora ferox</name>
    <dbReference type="NCBI Taxonomy" id="7183"/>
</organismHost>
<sequence>MYYRDQYGNVKYAPEGMGPHHAASSSHHSAQHHHMTKENFSMDDVHSWFEKYKMWFLYALILALIFGVFMWWSKYNHDKKRSLNTASIFY</sequence>
<reference key="1">
    <citation type="journal article" date="2006" name="J. Virol.">
        <title>Genome of invertebrate iridescent virus type 3 (mosquito iridescent virus).</title>
        <authorList>
            <person name="Delhon G."/>
            <person name="Tulman E.R."/>
            <person name="Afonso C.L."/>
            <person name="Lu Z."/>
            <person name="Becnel J.J."/>
            <person name="Moser B.A."/>
            <person name="Kutish G.F."/>
            <person name="Rock D.L."/>
        </authorList>
    </citation>
    <scope>NUCLEOTIDE SEQUENCE [LARGE SCALE GENOMIC DNA]</scope>
</reference>